<proteinExistence type="inferred from homology"/>
<dbReference type="EC" id="2.1.1.-" evidence="1"/>
<dbReference type="EMBL" id="L43967">
    <property type="protein sequence ID" value="AAC71607.1"/>
    <property type="molecule type" value="Genomic_DNA"/>
</dbReference>
<dbReference type="PIR" id="A64242">
    <property type="entry name" value="A64242"/>
</dbReference>
<dbReference type="RefSeq" id="WP_009885942.1">
    <property type="nucleotide sequence ID" value="NC_000908.2"/>
</dbReference>
<dbReference type="SMR" id="P47620"/>
<dbReference type="FunCoup" id="P47620">
    <property type="interactions" value="143"/>
</dbReference>
<dbReference type="STRING" id="243273.MG_380"/>
<dbReference type="GeneID" id="88282563"/>
<dbReference type="KEGG" id="mge:MG_380"/>
<dbReference type="eggNOG" id="COG0357">
    <property type="taxonomic scope" value="Bacteria"/>
</dbReference>
<dbReference type="HOGENOM" id="CLU_065341_0_1_14"/>
<dbReference type="InParanoid" id="P47620"/>
<dbReference type="OrthoDB" id="9808773at2"/>
<dbReference type="BioCyc" id="MGEN243273:G1GJ2-474-MONOMER"/>
<dbReference type="Proteomes" id="UP000000807">
    <property type="component" value="Chromosome"/>
</dbReference>
<dbReference type="GO" id="GO:0005829">
    <property type="term" value="C:cytosol"/>
    <property type="evidence" value="ECO:0000318"/>
    <property type="project" value="GO_Central"/>
</dbReference>
<dbReference type="GO" id="GO:0070043">
    <property type="term" value="F:rRNA (guanine-N7-)-methyltransferase activity"/>
    <property type="evidence" value="ECO:0000318"/>
    <property type="project" value="GO_Central"/>
</dbReference>
<dbReference type="Gene3D" id="3.40.50.150">
    <property type="entry name" value="Vaccinia Virus protein VP39"/>
    <property type="match status" value="1"/>
</dbReference>
<dbReference type="HAMAP" id="MF_00074">
    <property type="entry name" value="16SrRNA_methyltr_G"/>
    <property type="match status" value="1"/>
</dbReference>
<dbReference type="InterPro" id="IPR003682">
    <property type="entry name" value="rRNA_ssu_MeTfrase_G"/>
</dbReference>
<dbReference type="InterPro" id="IPR029063">
    <property type="entry name" value="SAM-dependent_MTases_sf"/>
</dbReference>
<dbReference type="NCBIfam" id="TIGR00138">
    <property type="entry name" value="rsmG_gidB"/>
    <property type="match status" value="1"/>
</dbReference>
<dbReference type="PANTHER" id="PTHR31760">
    <property type="entry name" value="S-ADENOSYL-L-METHIONINE-DEPENDENT METHYLTRANSFERASES SUPERFAMILY PROTEIN"/>
    <property type="match status" value="1"/>
</dbReference>
<dbReference type="PANTHER" id="PTHR31760:SF0">
    <property type="entry name" value="S-ADENOSYL-L-METHIONINE-DEPENDENT METHYLTRANSFERASES SUPERFAMILY PROTEIN"/>
    <property type="match status" value="1"/>
</dbReference>
<dbReference type="Pfam" id="PF02527">
    <property type="entry name" value="GidB"/>
    <property type="match status" value="1"/>
</dbReference>
<dbReference type="PIRSF" id="PIRSF003078">
    <property type="entry name" value="GidB"/>
    <property type="match status" value="1"/>
</dbReference>
<dbReference type="SUPFAM" id="SSF53335">
    <property type="entry name" value="S-adenosyl-L-methionine-dependent methyltransferases"/>
    <property type="match status" value="1"/>
</dbReference>
<name>RSMG_MYCGE</name>
<comment type="function">
    <text evidence="1">Specifically methylates the N7 position of a guanine in 16S rRNA.</text>
</comment>
<comment type="subcellular location">
    <subcellularLocation>
        <location evidence="1">Cytoplasm</location>
    </subcellularLocation>
</comment>
<comment type="similarity">
    <text evidence="1">Belongs to the methyltransferase superfamily. RNA methyltransferase RsmG family.</text>
</comment>
<keyword id="KW-0963">Cytoplasm</keyword>
<keyword id="KW-0489">Methyltransferase</keyword>
<keyword id="KW-1185">Reference proteome</keyword>
<keyword id="KW-0698">rRNA processing</keyword>
<keyword id="KW-0949">S-adenosyl-L-methionine</keyword>
<keyword id="KW-0808">Transferase</keyword>
<accession>P47620</accession>
<evidence type="ECO:0000255" key="1">
    <source>
        <dbReference type="HAMAP-Rule" id="MF_00074"/>
    </source>
</evidence>
<protein>
    <recommendedName>
        <fullName evidence="1">Ribosomal RNA small subunit methyltransferase G</fullName>
        <ecNumber evidence="1">2.1.1.-</ecNumber>
    </recommendedName>
    <alternativeName>
        <fullName evidence="1">16S rRNA 7-methylguanosine methyltransferase</fullName>
        <shortName evidence="1">16S rRNA m7G methyltransferase</shortName>
    </alternativeName>
</protein>
<feature type="chain" id="PRO_0000184286" description="Ribosomal RNA small subunit methyltransferase G">
    <location>
        <begin position="1"/>
        <end position="192"/>
    </location>
</feature>
<feature type="binding site" evidence="1">
    <location>
        <position position="59"/>
    </location>
    <ligand>
        <name>S-adenosyl-L-methionine</name>
        <dbReference type="ChEBI" id="CHEBI:59789"/>
    </ligand>
</feature>
<feature type="binding site" evidence="1">
    <location>
        <begin position="111"/>
        <end position="112"/>
    </location>
    <ligand>
        <name>S-adenosyl-L-methionine</name>
        <dbReference type="ChEBI" id="CHEBI:59789"/>
    </ligand>
</feature>
<feature type="binding site" evidence="1">
    <location>
        <position position="124"/>
    </location>
    <ligand>
        <name>S-adenosyl-L-methionine</name>
        <dbReference type="ChEBI" id="CHEBI:59789"/>
    </ligand>
</feature>
<reference key="1">
    <citation type="journal article" date="1995" name="Science">
        <title>The minimal gene complement of Mycoplasma genitalium.</title>
        <authorList>
            <person name="Fraser C.M."/>
            <person name="Gocayne J.D."/>
            <person name="White O."/>
            <person name="Adams M.D."/>
            <person name="Clayton R.A."/>
            <person name="Fleischmann R.D."/>
            <person name="Bult C.J."/>
            <person name="Kerlavage A.R."/>
            <person name="Sutton G.G."/>
            <person name="Kelley J.M."/>
            <person name="Fritchman J.L."/>
            <person name="Weidman J.F."/>
            <person name="Small K.V."/>
            <person name="Sandusky M."/>
            <person name="Fuhrmann J.L."/>
            <person name="Nguyen D.T."/>
            <person name="Utterback T.R."/>
            <person name="Saudek D.M."/>
            <person name="Phillips C.A."/>
            <person name="Merrick J.M."/>
            <person name="Tomb J.-F."/>
            <person name="Dougherty B.A."/>
            <person name="Bott K.F."/>
            <person name="Hu P.-C."/>
            <person name="Lucier T.S."/>
            <person name="Peterson S.N."/>
            <person name="Smith H.O."/>
            <person name="Hutchison C.A. III"/>
            <person name="Venter J.C."/>
        </authorList>
    </citation>
    <scope>NUCLEOTIDE SEQUENCE [LARGE SCALE GENOMIC DNA]</scope>
    <source>
        <strain>ATCC 33530 / DSM 19775 / NCTC 10195 / G37</strain>
    </source>
</reference>
<sequence>MNNANFEKYVDLVFEANKNFNLTGFKTKEAIYQNLVIEILTLFKGYEKFFIDKTVADLGSGNGSPGIILKLLFQKIKKLVLIDSKHKKISFLNKLTKQLNLEKTVAICERIEVHKNHYDVICSRGLSTIIKVNDLAFSLLNSKGIIFHIKQSLDQYIEFEKSNQKNQFNLLFIKHFTSQNKKLILIALQKND</sequence>
<organism>
    <name type="scientific">Mycoplasma genitalium (strain ATCC 33530 / DSM 19775 / NCTC 10195 / G37)</name>
    <name type="common">Mycoplasmoides genitalium</name>
    <dbReference type="NCBI Taxonomy" id="243273"/>
    <lineage>
        <taxon>Bacteria</taxon>
        <taxon>Bacillati</taxon>
        <taxon>Mycoplasmatota</taxon>
        <taxon>Mycoplasmoidales</taxon>
        <taxon>Mycoplasmoidaceae</taxon>
        <taxon>Mycoplasmoides</taxon>
    </lineage>
</organism>
<gene>
    <name evidence="1" type="primary">rsmG</name>
    <name type="ordered locus">MG380</name>
</gene>